<gene>
    <name evidence="1" type="primary">surE</name>
    <name type="ordered locus">Rsph17025_1977</name>
</gene>
<accession>A4WU04</accession>
<sequence length="261" mass="27749">MRILITNDDGINAPGLEVLEGIARDLAGPDGEVWTVAPAFEQSGVSHAISYTHPMMIAKLAPRRYAAEGSPADCVLAALYDVLQGARPDLVLSGVNRGNNSAENVLYSGTVGGALEAALQGLPAIALSQFLGPETEGLADPFEGARTHGARIVRLLLEKGLWDDGDYRLFYNVNFPPKPAAGVRGQRVAAQGFRRDTSFGVEPHMSPSGRRFLWIRGGAQHSPTLPGTDAAVNLDGYISITPMRADLTAHDRLAELEALIG</sequence>
<feature type="chain" id="PRO_1000007785" description="5'-nucleotidase SurE">
    <location>
        <begin position="1"/>
        <end position="261"/>
    </location>
</feature>
<feature type="binding site" evidence="1">
    <location>
        <position position="8"/>
    </location>
    <ligand>
        <name>a divalent metal cation</name>
        <dbReference type="ChEBI" id="CHEBI:60240"/>
    </ligand>
</feature>
<feature type="binding site" evidence="1">
    <location>
        <position position="9"/>
    </location>
    <ligand>
        <name>a divalent metal cation</name>
        <dbReference type="ChEBI" id="CHEBI:60240"/>
    </ligand>
</feature>
<feature type="binding site" evidence="1">
    <location>
        <position position="43"/>
    </location>
    <ligand>
        <name>a divalent metal cation</name>
        <dbReference type="ChEBI" id="CHEBI:60240"/>
    </ligand>
</feature>
<feature type="binding site" evidence="1">
    <location>
        <position position="96"/>
    </location>
    <ligand>
        <name>a divalent metal cation</name>
        <dbReference type="ChEBI" id="CHEBI:60240"/>
    </ligand>
</feature>
<organism>
    <name type="scientific">Cereibacter sphaeroides (strain ATCC 17025 / ATH 2.4.3)</name>
    <name type="common">Rhodobacter sphaeroides</name>
    <dbReference type="NCBI Taxonomy" id="349102"/>
    <lineage>
        <taxon>Bacteria</taxon>
        <taxon>Pseudomonadati</taxon>
        <taxon>Pseudomonadota</taxon>
        <taxon>Alphaproteobacteria</taxon>
        <taxon>Rhodobacterales</taxon>
        <taxon>Paracoccaceae</taxon>
        <taxon>Cereibacter</taxon>
    </lineage>
</organism>
<reference key="1">
    <citation type="submission" date="2007-04" db="EMBL/GenBank/DDBJ databases">
        <title>Complete sequence of chromosome of Rhodobacter sphaeroides ATCC 17025.</title>
        <authorList>
            <consortium name="US DOE Joint Genome Institute"/>
            <person name="Copeland A."/>
            <person name="Lucas S."/>
            <person name="Lapidus A."/>
            <person name="Barry K."/>
            <person name="Detter J.C."/>
            <person name="Glavina del Rio T."/>
            <person name="Hammon N."/>
            <person name="Israni S."/>
            <person name="Dalin E."/>
            <person name="Tice H."/>
            <person name="Pitluck S."/>
            <person name="Chertkov O."/>
            <person name="Brettin T."/>
            <person name="Bruce D."/>
            <person name="Han C."/>
            <person name="Schmutz J."/>
            <person name="Larimer F."/>
            <person name="Land M."/>
            <person name="Hauser L."/>
            <person name="Kyrpides N."/>
            <person name="Kim E."/>
            <person name="Richardson P."/>
            <person name="Mackenzie C."/>
            <person name="Choudhary M."/>
            <person name="Donohue T.J."/>
            <person name="Kaplan S."/>
        </authorList>
    </citation>
    <scope>NUCLEOTIDE SEQUENCE [LARGE SCALE GENOMIC DNA]</scope>
    <source>
        <strain>ATCC 17025 / ATH 2.4.3</strain>
    </source>
</reference>
<evidence type="ECO:0000255" key="1">
    <source>
        <dbReference type="HAMAP-Rule" id="MF_00060"/>
    </source>
</evidence>
<keyword id="KW-0963">Cytoplasm</keyword>
<keyword id="KW-0378">Hydrolase</keyword>
<keyword id="KW-0479">Metal-binding</keyword>
<keyword id="KW-0547">Nucleotide-binding</keyword>
<protein>
    <recommendedName>
        <fullName evidence="1">5'-nucleotidase SurE</fullName>
        <ecNumber evidence="1">3.1.3.5</ecNumber>
    </recommendedName>
    <alternativeName>
        <fullName evidence="1">Nucleoside 5'-monophosphate phosphohydrolase</fullName>
    </alternativeName>
</protein>
<dbReference type="EC" id="3.1.3.5" evidence="1"/>
<dbReference type="EMBL" id="CP000661">
    <property type="protein sequence ID" value="ABP70868.1"/>
    <property type="molecule type" value="Genomic_DNA"/>
</dbReference>
<dbReference type="SMR" id="A4WU04"/>
<dbReference type="STRING" id="349102.Rsph17025_1977"/>
<dbReference type="KEGG" id="rsq:Rsph17025_1977"/>
<dbReference type="eggNOG" id="COG0496">
    <property type="taxonomic scope" value="Bacteria"/>
</dbReference>
<dbReference type="HOGENOM" id="CLU_045192_1_2_5"/>
<dbReference type="BioCyc" id="RSPH349102:G1G8M-2042-MONOMER"/>
<dbReference type="GO" id="GO:0005737">
    <property type="term" value="C:cytoplasm"/>
    <property type="evidence" value="ECO:0007669"/>
    <property type="project" value="UniProtKB-SubCell"/>
</dbReference>
<dbReference type="GO" id="GO:0008254">
    <property type="term" value="F:3'-nucleotidase activity"/>
    <property type="evidence" value="ECO:0007669"/>
    <property type="project" value="TreeGrafter"/>
</dbReference>
<dbReference type="GO" id="GO:0008253">
    <property type="term" value="F:5'-nucleotidase activity"/>
    <property type="evidence" value="ECO:0007669"/>
    <property type="project" value="UniProtKB-UniRule"/>
</dbReference>
<dbReference type="GO" id="GO:0004309">
    <property type="term" value="F:exopolyphosphatase activity"/>
    <property type="evidence" value="ECO:0007669"/>
    <property type="project" value="TreeGrafter"/>
</dbReference>
<dbReference type="GO" id="GO:0046872">
    <property type="term" value="F:metal ion binding"/>
    <property type="evidence" value="ECO:0007669"/>
    <property type="project" value="UniProtKB-UniRule"/>
</dbReference>
<dbReference type="GO" id="GO:0000166">
    <property type="term" value="F:nucleotide binding"/>
    <property type="evidence" value="ECO:0007669"/>
    <property type="project" value="UniProtKB-KW"/>
</dbReference>
<dbReference type="Gene3D" id="3.40.1210.10">
    <property type="entry name" value="Survival protein SurE-like phosphatase/nucleotidase"/>
    <property type="match status" value="1"/>
</dbReference>
<dbReference type="HAMAP" id="MF_00060">
    <property type="entry name" value="SurE"/>
    <property type="match status" value="1"/>
</dbReference>
<dbReference type="InterPro" id="IPR030048">
    <property type="entry name" value="SurE"/>
</dbReference>
<dbReference type="InterPro" id="IPR002828">
    <property type="entry name" value="SurE-like_Pase/nucleotidase"/>
</dbReference>
<dbReference type="InterPro" id="IPR036523">
    <property type="entry name" value="SurE-like_sf"/>
</dbReference>
<dbReference type="NCBIfam" id="NF001490">
    <property type="entry name" value="PRK00346.1-4"/>
    <property type="match status" value="1"/>
</dbReference>
<dbReference type="NCBIfam" id="NF010541">
    <property type="entry name" value="PRK13931.1"/>
    <property type="match status" value="1"/>
</dbReference>
<dbReference type="NCBIfam" id="TIGR00087">
    <property type="entry name" value="surE"/>
    <property type="match status" value="1"/>
</dbReference>
<dbReference type="PANTHER" id="PTHR30457">
    <property type="entry name" value="5'-NUCLEOTIDASE SURE"/>
    <property type="match status" value="1"/>
</dbReference>
<dbReference type="PANTHER" id="PTHR30457:SF12">
    <property type="entry name" value="5'_3'-NUCLEOTIDASE SURE"/>
    <property type="match status" value="1"/>
</dbReference>
<dbReference type="Pfam" id="PF01975">
    <property type="entry name" value="SurE"/>
    <property type="match status" value="1"/>
</dbReference>
<dbReference type="SUPFAM" id="SSF64167">
    <property type="entry name" value="SurE-like"/>
    <property type="match status" value="1"/>
</dbReference>
<comment type="function">
    <text evidence="1">Nucleotidase that shows phosphatase activity on nucleoside 5'-monophosphates.</text>
</comment>
<comment type="catalytic activity">
    <reaction evidence="1">
        <text>a ribonucleoside 5'-phosphate + H2O = a ribonucleoside + phosphate</text>
        <dbReference type="Rhea" id="RHEA:12484"/>
        <dbReference type="ChEBI" id="CHEBI:15377"/>
        <dbReference type="ChEBI" id="CHEBI:18254"/>
        <dbReference type="ChEBI" id="CHEBI:43474"/>
        <dbReference type="ChEBI" id="CHEBI:58043"/>
        <dbReference type="EC" id="3.1.3.5"/>
    </reaction>
</comment>
<comment type="cofactor">
    <cofactor evidence="1">
        <name>a divalent metal cation</name>
        <dbReference type="ChEBI" id="CHEBI:60240"/>
    </cofactor>
    <text evidence="1">Binds 1 divalent metal cation per subunit.</text>
</comment>
<comment type="subcellular location">
    <subcellularLocation>
        <location evidence="1">Cytoplasm</location>
    </subcellularLocation>
</comment>
<comment type="similarity">
    <text evidence="1">Belongs to the SurE nucleotidase family.</text>
</comment>
<name>SURE_CERS5</name>
<proteinExistence type="inferred from homology"/>